<name>NNR_THEMA</name>
<proteinExistence type="evidence at protein level"/>
<evidence type="ECO:0000250" key="1"/>
<evidence type="ECO:0000305" key="2"/>
<evidence type="ECO:0007829" key="3">
    <source>
        <dbReference type="PDB" id="3RTA"/>
    </source>
</evidence>
<evidence type="ECO:0007829" key="4">
    <source>
        <dbReference type="PDB" id="3RTB"/>
    </source>
</evidence>
<keyword id="KW-0002">3D-structure</keyword>
<keyword id="KW-0067">ATP-binding</keyword>
<keyword id="KW-0413">Isomerase</keyword>
<keyword id="KW-0456">Lyase</keyword>
<keyword id="KW-0479">Metal-binding</keyword>
<keyword id="KW-0511">Multifunctional enzyme</keyword>
<keyword id="KW-0520">NAD</keyword>
<keyword id="KW-0521">NADP</keyword>
<keyword id="KW-0547">Nucleotide-binding</keyword>
<keyword id="KW-0630">Potassium</keyword>
<keyword id="KW-1185">Reference proteome</keyword>
<comment type="function">
    <text evidence="1">Bifunctional enzyme that catalyzes the epimerization of the S- and R-forms of NAD(P)HX and the dehydration of the S-form of NAD(P)HX at the expense of ADP, which is converted to AMP. This allows the repair of both epimers of NAD(P)HX, a damaged form of NAD(P)H that is a result of enzymatic or heat-dependent hydration (By similarity).</text>
</comment>
<comment type="catalytic activity">
    <reaction>
        <text>(6S)-NADHX + ADP = AMP + phosphate + NADH + H(+)</text>
        <dbReference type="Rhea" id="RHEA:32223"/>
        <dbReference type="ChEBI" id="CHEBI:15378"/>
        <dbReference type="ChEBI" id="CHEBI:43474"/>
        <dbReference type="ChEBI" id="CHEBI:57945"/>
        <dbReference type="ChEBI" id="CHEBI:64074"/>
        <dbReference type="ChEBI" id="CHEBI:456215"/>
        <dbReference type="ChEBI" id="CHEBI:456216"/>
        <dbReference type="EC" id="4.2.1.136"/>
    </reaction>
</comment>
<comment type="catalytic activity">
    <reaction>
        <text>(6S)-NADPHX + ADP = AMP + phosphate + NADPH + H(+)</text>
        <dbReference type="Rhea" id="RHEA:32235"/>
        <dbReference type="ChEBI" id="CHEBI:15378"/>
        <dbReference type="ChEBI" id="CHEBI:43474"/>
        <dbReference type="ChEBI" id="CHEBI:57783"/>
        <dbReference type="ChEBI" id="CHEBI:64076"/>
        <dbReference type="ChEBI" id="CHEBI:456215"/>
        <dbReference type="ChEBI" id="CHEBI:456216"/>
        <dbReference type="EC" id="4.2.1.136"/>
    </reaction>
</comment>
<comment type="catalytic activity">
    <reaction>
        <text>(6R)-NADHX = (6S)-NADHX</text>
        <dbReference type="Rhea" id="RHEA:32215"/>
        <dbReference type="ChEBI" id="CHEBI:64074"/>
        <dbReference type="ChEBI" id="CHEBI:64075"/>
        <dbReference type="EC" id="5.1.99.6"/>
    </reaction>
</comment>
<comment type="catalytic activity">
    <reaction>
        <text>(6R)-NADPHX = (6S)-NADPHX</text>
        <dbReference type="Rhea" id="RHEA:32227"/>
        <dbReference type="ChEBI" id="CHEBI:64076"/>
        <dbReference type="ChEBI" id="CHEBI:64077"/>
        <dbReference type="EC" id="5.1.99.6"/>
    </reaction>
</comment>
<comment type="cofactor">
    <cofactor evidence="1">
        <name>K(+)</name>
        <dbReference type="ChEBI" id="CHEBI:29103"/>
    </cofactor>
    <text evidence="1">Binds 1 potassium ion per subunit.</text>
</comment>
<comment type="similarity">
    <text evidence="2">In the N-terminal section; belongs to the NnrE/AIBP family.</text>
</comment>
<comment type="similarity">
    <text evidence="2">In the C-terminal section; belongs to the NnrD/CARKD family.</text>
</comment>
<feature type="chain" id="PRO_0000416413" description="Bifunctional NAD(P)H-hydrate repair enzyme Nnr">
    <location>
        <begin position="1"/>
        <end position="490"/>
    </location>
</feature>
<feature type="domain" description="YjeF N-terminal">
    <location>
        <begin position="1"/>
        <end position="204"/>
    </location>
</feature>
<feature type="domain" description="YjeF C-terminal">
    <location>
        <begin position="212"/>
        <end position="488"/>
    </location>
</feature>
<feature type="region of interest" description="NAD(P)H-hydrate epimerase" evidence="1">
    <location>
        <begin position="1"/>
        <end position="204"/>
    </location>
</feature>
<feature type="region of interest" description="NADPHX 1; for epimerase activity">
    <location>
        <begin position="51"/>
        <end position="55"/>
    </location>
</feature>
<feature type="region of interest" description="NADPHX 1; for epimerase activity">
    <location>
        <begin position="118"/>
        <end position="124"/>
    </location>
</feature>
<feature type="region of interest" description="ADP-dependent (S)-NAD(P)H-hydrate dehydratase" evidence="1">
    <location>
        <begin position="212"/>
        <end position="490"/>
    </location>
</feature>
<feature type="region of interest" description="NADPHX 2; for dehydratase activity">
    <location>
        <begin position="366"/>
        <end position="372"/>
    </location>
</feature>
<feature type="binding site">
    <location>
        <position position="52"/>
    </location>
    <ligand>
        <name>K(+)</name>
        <dbReference type="ChEBI" id="CHEBI:29103"/>
    </ligand>
</feature>
<feature type="binding site">
    <location>
        <position position="114"/>
    </location>
    <ligand>
        <name>K(+)</name>
        <dbReference type="ChEBI" id="CHEBI:29103"/>
    </ligand>
</feature>
<feature type="binding site">
    <location>
        <position position="129"/>
    </location>
    <ligand>
        <name>(6S)-NADPHX</name>
        <dbReference type="ChEBI" id="CHEBI:64076"/>
        <label>1</label>
        <note>for epimerase activity</note>
    </ligand>
</feature>
<feature type="binding site">
    <location>
        <position position="147"/>
    </location>
    <ligand>
        <name>(6S)-NADPHX</name>
        <dbReference type="ChEBI" id="CHEBI:64076"/>
        <label>1</label>
        <note>for epimerase activity</note>
    </ligand>
</feature>
<feature type="binding site">
    <location>
        <position position="150"/>
    </location>
    <ligand>
        <name>K(+)</name>
        <dbReference type="ChEBI" id="CHEBI:29103"/>
    </ligand>
</feature>
<feature type="binding site">
    <location>
        <position position="317"/>
    </location>
    <ligand>
        <name>(6S)-NADPHX</name>
        <dbReference type="ChEBI" id="CHEBI:64076"/>
        <label>2</label>
        <note>for dehydratase activity</note>
    </ligand>
</feature>
<feature type="binding site">
    <location>
        <begin position="402"/>
        <end position="406"/>
    </location>
    <ligand>
        <name>ADP</name>
        <dbReference type="ChEBI" id="CHEBI:456216"/>
    </ligand>
</feature>
<feature type="binding site">
    <location>
        <begin position="421"/>
        <end position="430"/>
    </location>
    <ligand>
        <name>ADP</name>
        <dbReference type="ChEBI" id="CHEBI:456216"/>
    </ligand>
</feature>
<feature type="binding site">
    <location>
        <position position="431"/>
    </location>
    <ligand>
        <name>(6S)-NADPHX</name>
        <dbReference type="ChEBI" id="CHEBI:64076"/>
        <label>2</label>
        <note>for dehydratase activity</note>
    </ligand>
</feature>
<feature type="helix" evidence="3">
    <location>
        <begin position="2"/>
        <end position="10"/>
    </location>
</feature>
<feature type="helix" evidence="3">
    <location>
        <begin position="16"/>
        <end position="35"/>
    </location>
</feature>
<feature type="helix" evidence="4">
    <location>
        <begin position="38"/>
        <end position="40"/>
    </location>
</feature>
<feature type="strand" evidence="3">
    <location>
        <begin position="42"/>
        <end position="47"/>
    </location>
</feature>
<feature type="helix" evidence="3">
    <location>
        <begin position="51"/>
        <end position="63"/>
    </location>
</feature>
<feature type="turn" evidence="3">
    <location>
        <begin position="64"/>
        <end position="66"/>
    </location>
</feature>
<feature type="strand" evidence="3">
    <location>
        <begin position="67"/>
        <end position="74"/>
    </location>
</feature>
<feature type="helix" evidence="3">
    <location>
        <begin position="81"/>
        <end position="92"/>
    </location>
</feature>
<feature type="strand" evidence="3">
    <location>
        <begin position="97"/>
        <end position="100"/>
    </location>
</feature>
<feature type="helix" evidence="3">
    <location>
        <begin position="103"/>
        <end position="108"/>
    </location>
</feature>
<feature type="strand" evidence="3">
    <location>
        <begin position="110"/>
        <end position="116"/>
    </location>
</feature>
<feature type="helix" evidence="3">
    <location>
        <begin position="127"/>
        <end position="138"/>
    </location>
</feature>
<feature type="strand" evidence="3">
    <location>
        <begin position="142"/>
        <end position="148"/>
    </location>
</feature>
<feature type="turn" evidence="3">
    <location>
        <begin position="154"/>
        <end position="156"/>
    </location>
</feature>
<feature type="strand" evidence="3">
    <location>
        <begin position="159"/>
        <end position="161"/>
    </location>
</feature>
<feature type="strand" evidence="3">
    <location>
        <begin position="167"/>
        <end position="174"/>
    </location>
</feature>
<feature type="helix" evidence="3">
    <location>
        <begin position="177"/>
        <end position="180"/>
    </location>
</feature>
<feature type="helix" evidence="3">
    <location>
        <begin position="184"/>
        <end position="188"/>
    </location>
</feature>
<feature type="strand" evidence="3">
    <location>
        <begin position="190"/>
        <end position="194"/>
    </location>
</feature>
<feature type="helix" evidence="3">
    <location>
        <begin position="200"/>
        <end position="203"/>
    </location>
</feature>
<feature type="strand" evidence="3">
    <location>
        <begin position="207"/>
        <end position="210"/>
    </location>
</feature>
<feature type="helix" evidence="3">
    <location>
        <begin position="213"/>
        <end position="219"/>
    </location>
</feature>
<feature type="helix" evidence="3">
    <location>
        <begin position="229"/>
        <end position="232"/>
    </location>
</feature>
<feature type="strand" evidence="3">
    <location>
        <begin position="234"/>
        <end position="238"/>
    </location>
</feature>
<feature type="helix" evidence="3">
    <location>
        <begin position="247"/>
        <end position="257"/>
    </location>
</feature>
<feature type="strand" evidence="3">
    <location>
        <begin position="261"/>
        <end position="268"/>
    </location>
</feature>
<feature type="turn" evidence="3">
    <location>
        <begin position="269"/>
        <end position="272"/>
    </location>
</feature>
<feature type="helix" evidence="3">
    <location>
        <begin position="273"/>
        <end position="278"/>
    </location>
</feature>
<feature type="strand" evidence="3">
    <location>
        <begin position="282"/>
        <end position="287"/>
    </location>
</feature>
<feature type="strand" evidence="3">
    <location>
        <begin position="290"/>
        <end position="293"/>
    </location>
</feature>
<feature type="helix" evidence="3">
    <location>
        <begin position="296"/>
        <end position="298"/>
    </location>
</feature>
<feature type="helix" evidence="3">
    <location>
        <begin position="299"/>
        <end position="306"/>
    </location>
</feature>
<feature type="strand" evidence="3">
    <location>
        <begin position="310"/>
        <end position="314"/>
    </location>
</feature>
<feature type="helix" evidence="3">
    <location>
        <begin position="322"/>
        <end position="334"/>
    </location>
</feature>
<feature type="strand" evidence="3">
    <location>
        <begin position="339"/>
        <end position="341"/>
    </location>
</feature>
<feature type="helix" evidence="3">
    <location>
        <begin position="343"/>
        <end position="347"/>
    </location>
</feature>
<feature type="helix" evidence="3">
    <location>
        <begin position="351"/>
        <end position="356"/>
    </location>
</feature>
<feature type="strand" evidence="3">
    <location>
        <begin position="361"/>
        <end position="363"/>
    </location>
</feature>
<feature type="helix" evidence="3">
    <location>
        <begin position="367"/>
        <end position="374"/>
    </location>
</feature>
<feature type="helix" evidence="3">
    <location>
        <begin position="378"/>
        <end position="381"/>
    </location>
</feature>
<feature type="helix" evidence="3">
    <location>
        <begin position="385"/>
        <end position="395"/>
    </location>
</feature>
<feature type="strand" evidence="3">
    <location>
        <begin position="397"/>
        <end position="401"/>
    </location>
</feature>
<feature type="strand" evidence="3">
    <location>
        <begin position="403"/>
        <end position="409"/>
    </location>
</feature>
<feature type="strand" evidence="3">
    <location>
        <begin position="414"/>
        <end position="417"/>
    </location>
</feature>
<feature type="helix" evidence="3">
    <location>
        <begin position="422"/>
        <end position="424"/>
    </location>
</feature>
<feature type="helix" evidence="3">
    <location>
        <begin position="429"/>
        <end position="442"/>
    </location>
</feature>
<feature type="helix" evidence="3">
    <location>
        <begin position="447"/>
        <end position="463"/>
    </location>
</feature>
<feature type="helix" evidence="3">
    <location>
        <begin position="469"/>
        <end position="471"/>
    </location>
</feature>
<feature type="helix" evidence="3">
    <location>
        <begin position="474"/>
        <end position="488"/>
    </location>
</feature>
<dbReference type="EC" id="4.2.1.136"/>
<dbReference type="EC" id="5.1.99.6"/>
<dbReference type="EMBL" id="AE000512">
    <property type="protein sequence ID" value="AAD36003.1"/>
    <property type="molecule type" value="Genomic_DNA"/>
</dbReference>
<dbReference type="PIR" id="C72317">
    <property type="entry name" value="C72317"/>
</dbReference>
<dbReference type="RefSeq" id="NP_228730.1">
    <property type="nucleotide sequence ID" value="NC_000853.1"/>
</dbReference>
<dbReference type="RefSeq" id="WP_010865220.1">
    <property type="nucleotide sequence ID" value="NC_000853.1"/>
</dbReference>
<dbReference type="PDB" id="2AX3">
    <property type="method" value="X-ray"/>
    <property type="resolution" value="2.27 A"/>
    <property type="chains" value="A=1-490"/>
</dbReference>
<dbReference type="PDB" id="3RRB">
    <property type="method" value="X-ray"/>
    <property type="resolution" value="2.40 A"/>
    <property type="chains" value="A=1-490"/>
</dbReference>
<dbReference type="PDB" id="3RRE">
    <property type="method" value="X-ray"/>
    <property type="resolution" value="2.15 A"/>
    <property type="chains" value="A=1-490"/>
</dbReference>
<dbReference type="PDB" id="3RRF">
    <property type="method" value="X-ray"/>
    <property type="resolution" value="2.10 A"/>
    <property type="chains" value="A=1-490"/>
</dbReference>
<dbReference type="PDB" id="3RRJ">
    <property type="method" value="X-ray"/>
    <property type="resolution" value="2.50 A"/>
    <property type="chains" value="A=1-490"/>
</dbReference>
<dbReference type="PDB" id="3RS8">
    <property type="method" value="X-ray"/>
    <property type="resolution" value="2.10 A"/>
    <property type="chains" value="A=1-490"/>
</dbReference>
<dbReference type="PDB" id="3RS9">
    <property type="method" value="X-ray"/>
    <property type="resolution" value="2.10 A"/>
    <property type="chains" value="A=1-490"/>
</dbReference>
<dbReference type="PDB" id="3RSF">
    <property type="method" value="X-ray"/>
    <property type="resolution" value="2.30 A"/>
    <property type="chains" value="A=1-490"/>
</dbReference>
<dbReference type="PDB" id="3RSG">
    <property type="method" value="X-ray"/>
    <property type="resolution" value="2.10 A"/>
    <property type="chains" value="A=1-490"/>
</dbReference>
<dbReference type="PDB" id="3RSQ">
    <property type="method" value="X-ray"/>
    <property type="resolution" value="2.05 A"/>
    <property type="chains" value="A=1-490"/>
</dbReference>
<dbReference type="PDB" id="3RSS">
    <property type="method" value="X-ray"/>
    <property type="resolution" value="1.95 A"/>
    <property type="chains" value="A=1-490"/>
</dbReference>
<dbReference type="PDB" id="3RT7">
    <property type="method" value="X-ray"/>
    <property type="resolution" value="2.10 A"/>
    <property type="chains" value="A=1-490"/>
</dbReference>
<dbReference type="PDB" id="3RT9">
    <property type="method" value="X-ray"/>
    <property type="resolution" value="1.95 A"/>
    <property type="chains" value="A=1-490"/>
</dbReference>
<dbReference type="PDB" id="3RTA">
    <property type="method" value="X-ray"/>
    <property type="resolution" value="1.95 A"/>
    <property type="chains" value="A=1-490"/>
</dbReference>
<dbReference type="PDB" id="3RTB">
    <property type="method" value="X-ray"/>
    <property type="resolution" value="2.10 A"/>
    <property type="chains" value="A=1-490"/>
</dbReference>
<dbReference type="PDB" id="3RTC">
    <property type="method" value="X-ray"/>
    <property type="resolution" value="2.10 A"/>
    <property type="chains" value="A=1-490"/>
</dbReference>
<dbReference type="PDB" id="3RTD">
    <property type="method" value="X-ray"/>
    <property type="resolution" value="2.30 A"/>
    <property type="chains" value="A=1-490"/>
</dbReference>
<dbReference type="PDB" id="3RTE">
    <property type="method" value="X-ray"/>
    <property type="resolution" value="2.10 A"/>
    <property type="chains" value="A=1-490"/>
</dbReference>
<dbReference type="PDB" id="3RTG">
    <property type="method" value="X-ray"/>
    <property type="resolution" value="2.05 A"/>
    <property type="chains" value="A=1-490"/>
</dbReference>
<dbReference type="PDB" id="3RU2">
    <property type="method" value="X-ray"/>
    <property type="resolution" value="2.20 A"/>
    <property type="chains" value="A=1-490"/>
</dbReference>
<dbReference type="PDB" id="3RU3">
    <property type="method" value="X-ray"/>
    <property type="resolution" value="2.60 A"/>
    <property type="chains" value="A=1-490"/>
</dbReference>
<dbReference type="PDBsum" id="2AX3"/>
<dbReference type="PDBsum" id="3RRB"/>
<dbReference type="PDBsum" id="3RRE"/>
<dbReference type="PDBsum" id="3RRF"/>
<dbReference type="PDBsum" id="3RRJ"/>
<dbReference type="PDBsum" id="3RS8"/>
<dbReference type="PDBsum" id="3RS9"/>
<dbReference type="PDBsum" id="3RSF"/>
<dbReference type="PDBsum" id="3RSG"/>
<dbReference type="PDBsum" id="3RSQ"/>
<dbReference type="PDBsum" id="3RSS"/>
<dbReference type="PDBsum" id="3RT7"/>
<dbReference type="PDBsum" id="3RT9"/>
<dbReference type="PDBsum" id="3RTA"/>
<dbReference type="PDBsum" id="3RTB"/>
<dbReference type="PDBsum" id="3RTC"/>
<dbReference type="PDBsum" id="3RTD"/>
<dbReference type="PDBsum" id="3RTE"/>
<dbReference type="PDBsum" id="3RTG"/>
<dbReference type="PDBsum" id="3RU2"/>
<dbReference type="PDBsum" id="3RU3"/>
<dbReference type="SMR" id="Q9X024"/>
<dbReference type="DIP" id="DIP-59950N"/>
<dbReference type="FunCoup" id="Q9X024">
    <property type="interactions" value="108"/>
</dbReference>
<dbReference type="STRING" id="243274.TM_0922"/>
<dbReference type="PaxDb" id="243274-THEMA_00025"/>
<dbReference type="DNASU" id="898596"/>
<dbReference type="EnsemblBacteria" id="AAD36003">
    <property type="protein sequence ID" value="AAD36003"/>
    <property type="gene ID" value="TM_0922"/>
</dbReference>
<dbReference type="KEGG" id="tma:TM0922"/>
<dbReference type="PATRIC" id="fig|243274.5.peg.936"/>
<dbReference type="eggNOG" id="COG0062">
    <property type="taxonomic scope" value="Bacteria"/>
</dbReference>
<dbReference type="eggNOG" id="COG0063">
    <property type="taxonomic scope" value="Bacteria"/>
</dbReference>
<dbReference type="InParanoid" id="Q9X024"/>
<dbReference type="OrthoDB" id="9806925at2"/>
<dbReference type="BRENDA" id="4.2.1.136">
    <property type="organism ID" value="6331"/>
</dbReference>
<dbReference type="EvolutionaryTrace" id="Q9X024"/>
<dbReference type="Proteomes" id="UP000008183">
    <property type="component" value="Chromosome"/>
</dbReference>
<dbReference type="GO" id="GO:0052855">
    <property type="term" value="F:ADP-dependent NAD(P)H-hydrate dehydratase activity"/>
    <property type="evidence" value="ECO:0000318"/>
    <property type="project" value="GO_Central"/>
</dbReference>
<dbReference type="GO" id="GO:0005524">
    <property type="term" value="F:ATP binding"/>
    <property type="evidence" value="ECO:0007669"/>
    <property type="project" value="UniProtKB-KW"/>
</dbReference>
<dbReference type="GO" id="GO:0046872">
    <property type="term" value="F:metal ion binding"/>
    <property type="evidence" value="ECO:0007669"/>
    <property type="project" value="UniProtKB-KW"/>
</dbReference>
<dbReference type="GO" id="GO:0052856">
    <property type="term" value="F:NAD(P)HX epimerase activity"/>
    <property type="evidence" value="ECO:0000318"/>
    <property type="project" value="GO_Central"/>
</dbReference>
<dbReference type="GO" id="GO:0110051">
    <property type="term" value="P:metabolite repair"/>
    <property type="evidence" value="ECO:0000318"/>
    <property type="project" value="GO_Central"/>
</dbReference>
<dbReference type="GO" id="GO:0046496">
    <property type="term" value="P:nicotinamide nucleotide metabolic process"/>
    <property type="evidence" value="ECO:0007669"/>
    <property type="project" value="UniProtKB-UniRule"/>
</dbReference>
<dbReference type="CDD" id="cd01171">
    <property type="entry name" value="YXKO-related"/>
    <property type="match status" value="1"/>
</dbReference>
<dbReference type="FunFam" id="3.40.50.10260:FF:000003">
    <property type="entry name" value="Multifunctional fusion protein"/>
    <property type="match status" value="1"/>
</dbReference>
<dbReference type="Gene3D" id="3.40.1190.20">
    <property type="match status" value="1"/>
</dbReference>
<dbReference type="Gene3D" id="3.40.50.10260">
    <property type="entry name" value="YjeF N-terminal domain"/>
    <property type="match status" value="1"/>
</dbReference>
<dbReference type="HAMAP" id="MF_01965">
    <property type="entry name" value="NADHX_dehydratase"/>
    <property type="match status" value="1"/>
</dbReference>
<dbReference type="HAMAP" id="MF_01966">
    <property type="entry name" value="NADHX_epimerase"/>
    <property type="match status" value="1"/>
</dbReference>
<dbReference type="InterPro" id="IPR017953">
    <property type="entry name" value="Carbohydrate_kinase_pred_CS"/>
</dbReference>
<dbReference type="InterPro" id="IPR000631">
    <property type="entry name" value="CARKD"/>
</dbReference>
<dbReference type="InterPro" id="IPR030677">
    <property type="entry name" value="Nnr"/>
</dbReference>
<dbReference type="InterPro" id="IPR029056">
    <property type="entry name" value="Ribokinase-like"/>
</dbReference>
<dbReference type="InterPro" id="IPR004443">
    <property type="entry name" value="YjeF_N_dom"/>
</dbReference>
<dbReference type="InterPro" id="IPR036652">
    <property type="entry name" value="YjeF_N_dom_sf"/>
</dbReference>
<dbReference type="NCBIfam" id="TIGR00196">
    <property type="entry name" value="yjeF_cterm"/>
    <property type="match status" value="1"/>
</dbReference>
<dbReference type="NCBIfam" id="TIGR00197">
    <property type="entry name" value="yjeF_nterm"/>
    <property type="match status" value="1"/>
</dbReference>
<dbReference type="PANTHER" id="PTHR12592:SF0">
    <property type="entry name" value="ATP-DEPENDENT (S)-NAD(P)H-HYDRATE DEHYDRATASE"/>
    <property type="match status" value="1"/>
</dbReference>
<dbReference type="PANTHER" id="PTHR12592">
    <property type="entry name" value="ATP-DEPENDENT (S)-NAD(P)H-HYDRATE DEHYDRATASE FAMILY MEMBER"/>
    <property type="match status" value="1"/>
</dbReference>
<dbReference type="Pfam" id="PF01256">
    <property type="entry name" value="Carb_kinase"/>
    <property type="match status" value="1"/>
</dbReference>
<dbReference type="Pfam" id="PF03853">
    <property type="entry name" value="YjeF_N"/>
    <property type="match status" value="1"/>
</dbReference>
<dbReference type="PIRSF" id="PIRSF017184">
    <property type="entry name" value="Nnr"/>
    <property type="match status" value="1"/>
</dbReference>
<dbReference type="SUPFAM" id="SSF53613">
    <property type="entry name" value="Ribokinase-like"/>
    <property type="match status" value="1"/>
</dbReference>
<dbReference type="SUPFAM" id="SSF64153">
    <property type="entry name" value="YjeF N-terminal domain-like"/>
    <property type="match status" value="1"/>
</dbReference>
<dbReference type="PROSITE" id="PS01049">
    <property type="entry name" value="YJEF_C_1"/>
    <property type="match status" value="1"/>
</dbReference>
<dbReference type="PROSITE" id="PS01050">
    <property type="entry name" value="YJEF_C_2"/>
    <property type="match status" value="1"/>
</dbReference>
<dbReference type="PROSITE" id="PS51383">
    <property type="entry name" value="YJEF_C_3"/>
    <property type="match status" value="1"/>
</dbReference>
<dbReference type="PROSITE" id="PS51385">
    <property type="entry name" value="YJEF_N"/>
    <property type="match status" value="1"/>
</dbReference>
<gene>
    <name type="primary">nnr</name>
    <name type="ordered locus">TM_0922</name>
</gene>
<protein>
    <recommendedName>
        <fullName>Bifunctional NAD(P)H-hydrate repair enzyme Nnr</fullName>
    </recommendedName>
    <alternativeName>
        <fullName>Nicotinamide nucleotide repair protein</fullName>
    </alternativeName>
    <domain>
        <recommendedName>
            <fullName>ADP-dependent (S)-NAD(P)H-hydrate dehydratase</fullName>
            <ecNumber>4.2.1.136</ecNumber>
        </recommendedName>
        <alternativeName>
            <fullName>ADP-dependent NAD(P)HX dehydratase</fullName>
        </alternativeName>
    </domain>
    <domain>
        <recommendedName>
            <fullName>NAD(P)H-hydrate epimerase</fullName>
            <ecNumber>5.1.99.6</ecNumber>
        </recommendedName>
        <alternativeName>
            <fullName>NAD(P)HX epimerase</fullName>
        </alternativeName>
    </domain>
</protein>
<reference key="1">
    <citation type="journal article" date="1999" name="Nature">
        <title>Evidence for lateral gene transfer between Archaea and Bacteria from genome sequence of Thermotoga maritima.</title>
        <authorList>
            <person name="Nelson K.E."/>
            <person name="Clayton R.A."/>
            <person name="Gill S.R."/>
            <person name="Gwinn M.L."/>
            <person name="Dodson R.J."/>
            <person name="Haft D.H."/>
            <person name="Hickey E.K."/>
            <person name="Peterson J.D."/>
            <person name="Nelson W.C."/>
            <person name="Ketchum K.A."/>
            <person name="McDonald L.A."/>
            <person name="Utterback T.R."/>
            <person name="Malek J.A."/>
            <person name="Linher K.D."/>
            <person name="Garrett M.M."/>
            <person name="Stewart A.M."/>
            <person name="Cotton M.D."/>
            <person name="Pratt M.S."/>
            <person name="Phillips C.A."/>
            <person name="Richardson D.L."/>
            <person name="Heidelberg J.F."/>
            <person name="Sutton G.G."/>
            <person name="Fleischmann R.D."/>
            <person name="Eisen J.A."/>
            <person name="White O."/>
            <person name="Salzberg S.L."/>
            <person name="Smith H.O."/>
            <person name="Venter J.C."/>
            <person name="Fraser C.M."/>
        </authorList>
    </citation>
    <scope>NUCLEOTIDE SEQUENCE [LARGE SCALE GENOMIC DNA]</scope>
    <source>
        <strain>ATCC 43589 / DSM 3109 / JCM 10099 / NBRC 100826 / MSB8</strain>
    </source>
</reference>
<reference key="2">
    <citation type="submission" date="2005-09" db="PDB data bank">
        <title>Crystal structure of hypothetical protein (TM0922) from Thermotoga maritima at 2.27 A resolution.</title>
        <authorList>
            <consortium name="Joint Center for Structural Genomics (JCSG)"/>
        </authorList>
    </citation>
    <scope>X-RAY CRYSTALLOGRAPHY (2.27 ANGSTROMS)</scope>
</reference>
<reference key="3">
    <citation type="journal article" date="2012" name="Structure">
        <title>Identification of unknown protein function using metabolite cocktail screening.</title>
        <authorList>
            <person name="Shumilin I.A."/>
            <person name="Cymborowski M."/>
            <person name="Chertihin O."/>
            <person name="Jha K.N."/>
            <person name="Herr J.C."/>
            <person name="Lesley S.A."/>
            <person name="Joachimiak A."/>
            <person name="Minor W."/>
        </authorList>
    </citation>
    <scope>X-RAY CRYSTALLOGRAPHY (1.95 ANGSTROMS) IN COMPLEXES WITH POTASSIUM; ADP AND NAD(P)HX ANALOGS</scope>
</reference>
<organism>
    <name type="scientific">Thermotoga maritima (strain ATCC 43589 / DSM 3109 / JCM 10099 / NBRC 100826 / MSB8)</name>
    <dbReference type="NCBI Taxonomy" id="243274"/>
    <lineage>
        <taxon>Bacteria</taxon>
        <taxon>Thermotogati</taxon>
        <taxon>Thermotogota</taxon>
        <taxon>Thermotogae</taxon>
        <taxon>Thermotogales</taxon>
        <taxon>Thermotogaceae</taxon>
        <taxon>Thermotoga</taxon>
    </lineage>
</organism>
<sequence length="490" mass="53004">MKEIDELTIKEYGVDSRILMERAGISVVLAMEEELGNLSDYRFLVLCGGGNNGGDGFVVARNLLGVVKDVLVVFLGKKKTPDCEYNYGLYKKFGGKVVEQFEPSILNEFDVVVDAIFGTGLRGEITGEYAEIINLVNKSGKVVVSVDVPSGIDSNTGKVLRTAVKADLTVTFGVPKIGHILFPGRDLTGKLKVANIGHPVHLINSINRYVITREMVRSLLPERPRDSHKGTYGKVLIIAGSRLYSGAPVLSGMGSLKVGTGLVKLAVPFPQNLIATSRFPELISVPIDTEKGFFSLQNLQECLELSKDVDVVAIGPGLGNNEHVREFVNEFLKTLEKPAVIDADAINVLDTSVLKERKSPAVLTPHPGEMARLVKKTVGDVKYNYELAEEFAKENDCVLVLKSATTIVTDGEKTLFNITGNTGLSKGGSGDVLTGMIAGFIAQGLSPLEASTVSVYLHGFAAELFEQDERGLTASELLRLIPEAIRRLKE</sequence>
<accession>Q9X024</accession>